<feature type="chain" id="PRO_1000070271" description="Ribonuclease Z">
    <location>
        <begin position="1"/>
        <end position="311"/>
    </location>
</feature>
<feature type="active site" description="Proton acceptor" evidence="1">
    <location>
        <position position="65"/>
    </location>
</feature>
<feature type="binding site" evidence="1">
    <location>
        <position position="61"/>
    </location>
    <ligand>
        <name>Zn(2+)</name>
        <dbReference type="ChEBI" id="CHEBI:29105"/>
        <label>1</label>
        <note>catalytic</note>
    </ligand>
</feature>
<feature type="binding site" evidence="1">
    <location>
        <position position="63"/>
    </location>
    <ligand>
        <name>Zn(2+)</name>
        <dbReference type="ChEBI" id="CHEBI:29105"/>
        <label>1</label>
        <note>catalytic</note>
    </ligand>
</feature>
<feature type="binding site" evidence="1">
    <location>
        <position position="65"/>
    </location>
    <ligand>
        <name>Zn(2+)</name>
        <dbReference type="ChEBI" id="CHEBI:29105"/>
        <label>2</label>
        <note>catalytic</note>
    </ligand>
</feature>
<feature type="binding site" evidence="1">
    <location>
        <position position="66"/>
    </location>
    <ligand>
        <name>Zn(2+)</name>
        <dbReference type="ChEBI" id="CHEBI:29105"/>
        <label>2</label>
        <note>catalytic</note>
    </ligand>
</feature>
<feature type="binding site" evidence="1">
    <location>
        <position position="148"/>
    </location>
    <ligand>
        <name>Zn(2+)</name>
        <dbReference type="ChEBI" id="CHEBI:29105"/>
        <label>1</label>
        <note>catalytic</note>
    </ligand>
</feature>
<feature type="binding site" evidence="1">
    <location>
        <position position="216"/>
    </location>
    <ligand>
        <name>Zn(2+)</name>
        <dbReference type="ChEBI" id="CHEBI:29105"/>
        <label>1</label>
        <note>catalytic</note>
    </ligand>
</feature>
<feature type="binding site" evidence="1">
    <location>
        <position position="216"/>
    </location>
    <ligand>
        <name>Zn(2+)</name>
        <dbReference type="ChEBI" id="CHEBI:29105"/>
        <label>2</label>
        <note>catalytic</note>
    </ligand>
</feature>
<feature type="binding site" evidence="1">
    <location>
        <position position="275"/>
    </location>
    <ligand>
        <name>Zn(2+)</name>
        <dbReference type="ChEBI" id="CHEBI:29105"/>
        <label>2</label>
        <note>catalytic</note>
    </ligand>
</feature>
<name>RNZ_CLONN</name>
<comment type="function">
    <text evidence="1">Zinc phosphodiesterase, which displays some tRNA 3'-processing endonuclease activity. Probably involved in tRNA maturation, by removing a 3'-trailer from precursor tRNA.</text>
</comment>
<comment type="catalytic activity">
    <reaction evidence="1">
        <text>Endonucleolytic cleavage of RNA, removing extra 3' nucleotides from tRNA precursor, generating 3' termini of tRNAs. A 3'-hydroxy group is left at the tRNA terminus and a 5'-phosphoryl group is left at the trailer molecule.</text>
        <dbReference type="EC" id="3.1.26.11"/>
    </reaction>
</comment>
<comment type="cofactor">
    <cofactor evidence="1">
        <name>Zn(2+)</name>
        <dbReference type="ChEBI" id="CHEBI:29105"/>
    </cofactor>
    <text evidence="1">Binds 2 Zn(2+) ions.</text>
</comment>
<comment type="subunit">
    <text evidence="1">Homodimer.</text>
</comment>
<comment type="similarity">
    <text evidence="1">Belongs to the RNase Z family.</text>
</comment>
<gene>
    <name evidence="1" type="primary">rnz</name>
    <name type="ordered locus">NT01CX_2360</name>
</gene>
<organism>
    <name type="scientific">Clostridium novyi (strain NT)</name>
    <dbReference type="NCBI Taxonomy" id="386415"/>
    <lineage>
        <taxon>Bacteria</taxon>
        <taxon>Bacillati</taxon>
        <taxon>Bacillota</taxon>
        <taxon>Clostridia</taxon>
        <taxon>Eubacteriales</taxon>
        <taxon>Clostridiaceae</taxon>
        <taxon>Clostridium</taxon>
    </lineage>
</organism>
<evidence type="ECO:0000255" key="1">
    <source>
        <dbReference type="HAMAP-Rule" id="MF_01818"/>
    </source>
</evidence>
<accession>A0Q1D1</accession>
<reference key="1">
    <citation type="journal article" date="2006" name="Nat. Biotechnol.">
        <title>The genome and transcriptomes of the anti-tumor agent Clostridium novyi-NT.</title>
        <authorList>
            <person name="Bettegowda C."/>
            <person name="Huang X."/>
            <person name="Lin J."/>
            <person name="Cheong I."/>
            <person name="Kohli M."/>
            <person name="Szabo S.A."/>
            <person name="Zhang X."/>
            <person name="Diaz L.A. Jr."/>
            <person name="Velculescu V.E."/>
            <person name="Parmigiani G."/>
            <person name="Kinzler K.W."/>
            <person name="Vogelstein B."/>
            <person name="Zhou S."/>
        </authorList>
    </citation>
    <scope>NUCLEOTIDE SEQUENCE [LARGE SCALE GENOMIC DNA]</scope>
    <source>
        <strain>NT</strain>
    </source>
</reference>
<keyword id="KW-0255">Endonuclease</keyword>
<keyword id="KW-0378">Hydrolase</keyword>
<keyword id="KW-0479">Metal-binding</keyword>
<keyword id="KW-0540">Nuclease</keyword>
<keyword id="KW-1185">Reference proteome</keyword>
<keyword id="KW-0819">tRNA processing</keyword>
<keyword id="KW-0862">Zinc</keyword>
<dbReference type="EC" id="3.1.26.11" evidence="1"/>
<dbReference type="EMBL" id="CP000382">
    <property type="protein sequence ID" value="ABK62205.1"/>
    <property type="molecule type" value="Genomic_DNA"/>
</dbReference>
<dbReference type="RefSeq" id="WP_011722427.1">
    <property type="nucleotide sequence ID" value="NC_008593.1"/>
</dbReference>
<dbReference type="SMR" id="A0Q1D1"/>
<dbReference type="STRING" id="386415.NT01CX_2360"/>
<dbReference type="KEGG" id="cno:NT01CX_2360"/>
<dbReference type="eggNOG" id="COG1234">
    <property type="taxonomic scope" value="Bacteria"/>
</dbReference>
<dbReference type="HOGENOM" id="CLU_031317_2_1_9"/>
<dbReference type="Proteomes" id="UP000008220">
    <property type="component" value="Chromosome"/>
</dbReference>
<dbReference type="GO" id="GO:0042781">
    <property type="term" value="F:3'-tRNA processing endoribonuclease activity"/>
    <property type="evidence" value="ECO:0007669"/>
    <property type="project" value="UniProtKB-UniRule"/>
</dbReference>
<dbReference type="GO" id="GO:0008270">
    <property type="term" value="F:zinc ion binding"/>
    <property type="evidence" value="ECO:0007669"/>
    <property type="project" value="UniProtKB-UniRule"/>
</dbReference>
<dbReference type="CDD" id="cd07717">
    <property type="entry name" value="RNaseZ_ZiPD-like_MBL-fold"/>
    <property type="match status" value="1"/>
</dbReference>
<dbReference type="Gene3D" id="3.60.15.10">
    <property type="entry name" value="Ribonuclease Z/Hydroxyacylglutathione hydrolase-like"/>
    <property type="match status" value="1"/>
</dbReference>
<dbReference type="HAMAP" id="MF_01818">
    <property type="entry name" value="RNase_Z_BN"/>
    <property type="match status" value="1"/>
</dbReference>
<dbReference type="InterPro" id="IPR001279">
    <property type="entry name" value="Metallo-B-lactamas"/>
</dbReference>
<dbReference type="InterPro" id="IPR036866">
    <property type="entry name" value="RibonucZ/Hydroxyglut_hydro"/>
</dbReference>
<dbReference type="InterPro" id="IPR013471">
    <property type="entry name" value="RNase_Z/BN"/>
</dbReference>
<dbReference type="NCBIfam" id="NF000801">
    <property type="entry name" value="PRK00055.1-3"/>
    <property type="match status" value="1"/>
</dbReference>
<dbReference type="NCBIfam" id="TIGR02651">
    <property type="entry name" value="RNase_Z"/>
    <property type="match status" value="1"/>
</dbReference>
<dbReference type="PANTHER" id="PTHR46018">
    <property type="entry name" value="ZINC PHOSPHODIESTERASE ELAC PROTEIN 1"/>
    <property type="match status" value="1"/>
</dbReference>
<dbReference type="PANTHER" id="PTHR46018:SF2">
    <property type="entry name" value="ZINC PHOSPHODIESTERASE ELAC PROTEIN 1"/>
    <property type="match status" value="1"/>
</dbReference>
<dbReference type="Pfam" id="PF00753">
    <property type="entry name" value="Lactamase_B"/>
    <property type="match status" value="1"/>
</dbReference>
<dbReference type="SUPFAM" id="SSF56281">
    <property type="entry name" value="Metallo-hydrolase/oxidoreductase"/>
    <property type="match status" value="1"/>
</dbReference>
<proteinExistence type="inferred from homology"/>
<protein>
    <recommendedName>
        <fullName evidence="1">Ribonuclease Z</fullName>
        <shortName evidence="1">RNase Z</shortName>
        <ecNumber evidence="1">3.1.26.11</ecNumber>
    </recommendedName>
    <alternativeName>
        <fullName evidence="1">tRNA 3 endonuclease</fullName>
    </alternativeName>
    <alternativeName>
        <fullName evidence="1">tRNase Z</fullName>
    </alternativeName>
</protein>
<sequence length="311" mass="34857">MIDVLFLGTGGGMPTPRRSLSSLLLNFKGCKILVDCGEGTQLSMKNAKTGFKDIDIICITHCHGDHIIGFPGILSTIGNSGRTNPLTIIGPKDITRIVKGLTVITPYLPYELNIIENPMQKLSFNVTKENLKLESGGELLIDTLELNHSIPCIAYNFTVKRKPKFNREKAVNYNIPRKFWGDLQVGKNINYEGRVYTPSMVLGKERKGIKISFVTDTTPIDSIISFIEESDMFICEGTYGTDDDIDKAIKNKHMTFSQAATLAFRGNVKELILTHFGVTMERPEEFLGFARKIFKNSYVAEDRMIKSLKFD</sequence>